<evidence type="ECO:0000255" key="1">
    <source>
        <dbReference type="HAMAP-Rule" id="MF_01338"/>
    </source>
</evidence>
<evidence type="ECO:0000305" key="2"/>
<comment type="function">
    <text evidence="1">RuBisCO catalyzes two reactions: the carboxylation of D-ribulose 1,5-bisphosphate, the primary event in carbon dioxide fixation, as well as the oxidative fragmentation of the pentose substrate. Both reactions occur simultaneously and in competition at the same active site.</text>
</comment>
<comment type="catalytic activity">
    <reaction evidence="1">
        <text>2 (2R)-3-phosphoglycerate + 2 H(+) = D-ribulose 1,5-bisphosphate + CO2 + H2O</text>
        <dbReference type="Rhea" id="RHEA:23124"/>
        <dbReference type="ChEBI" id="CHEBI:15377"/>
        <dbReference type="ChEBI" id="CHEBI:15378"/>
        <dbReference type="ChEBI" id="CHEBI:16526"/>
        <dbReference type="ChEBI" id="CHEBI:57870"/>
        <dbReference type="ChEBI" id="CHEBI:58272"/>
        <dbReference type="EC" id="4.1.1.39"/>
    </reaction>
</comment>
<comment type="catalytic activity">
    <reaction evidence="1">
        <text>D-ribulose 1,5-bisphosphate + O2 = 2-phosphoglycolate + (2R)-3-phosphoglycerate + 2 H(+)</text>
        <dbReference type="Rhea" id="RHEA:36631"/>
        <dbReference type="ChEBI" id="CHEBI:15378"/>
        <dbReference type="ChEBI" id="CHEBI:15379"/>
        <dbReference type="ChEBI" id="CHEBI:57870"/>
        <dbReference type="ChEBI" id="CHEBI:58033"/>
        <dbReference type="ChEBI" id="CHEBI:58272"/>
    </reaction>
</comment>
<comment type="cofactor">
    <cofactor evidence="1">
        <name>Mg(2+)</name>
        <dbReference type="ChEBI" id="CHEBI:18420"/>
    </cofactor>
    <text evidence="1">Binds 1 Mg(2+) ion per subunit.</text>
</comment>
<comment type="subunit">
    <text evidence="1">Heterohexadecamer of 8 large chains and 8 small chains.</text>
</comment>
<comment type="miscellaneous">
    <text evidence="1">The basic functional RuBisCO is composed of a large chain homodimer in a 'head-to-tail' conformation. In form I RuBisCO this homodimer is arranged in a barrel-like tetramer with the small subunits forming a tetrameric 'cap' on each end of the 'barrel'.</text>
</comment>
<comment type="similarity">
    <text evidence="1">Belongs to the RuBisCO large chain family. Type I subfamily.</text>
</comment>
<comment type="caution">
    <text evidence="2">In T.ferrooxidans two similar set of genes code for RuBisCO large and small chains: the rbcL1-rbcS1 and the rbcL2-rbcS2 sets.</text>
</comment>
<protein>
    <recommendedName>
        <fullName evidence="1">Ribulose bisphosphate carboxylase large chain 2</fullName>
        <shortName evidence="1">RuBisCO large subunit 2</shortName>
        <ecNumber evidence="1">4.1.1.39</ecNumber>
    </recommendedName>
</protein>
<gene>
    <name evidence="1" type="primary">cbbL2</name>
    <name evidence="1" type="synonym">rbcL2</name>
</gene>
<organism>
    <name type="scientific">Acidithiobacillus ferrooxidans</name>
    <name type="common">Thiobacillus ferrooxidans</name>
    <dbReference type="NCBI Taxonomy" id="920"/>
    <lineage>
        <taxon>Bacteria</taxon>
        <taxon>Pseudomonadati</taxon>
        <taxon>Pseudomonadota</taxon>
        <taxon>Acidithiobacillia</taxon>
        <taxon>Acidithiobacillales</taxon>
        <taxon>Acidithiobacillaceae</taxon>
        <taxon>Acidithiobacillus</taxon>
    </lineage>
</organism>
<feature type="chain" id="PRO_0000062658" description="Ribulose bisphosphate carboxylase large chain 2">
    <location>
        <begin position="1"/>
        <end position="473"/>
    </location>
</feature>
<feature type="active site" description="Proton acceptor" evidence="1">
    <location>
        <position position="168"/>
    </location>
</feature>
<feature type="active site" description="Proton acceptor" evidence="1">
    <location>
        <position position="287"/>
    </location>
</feature>
<feature type="binding site" description="in homodimeric partner" evidence="1">
    <location>
        <position position="116"/>
    </location>
    <ligand>
        <name>substrate</name>
    </ligand>
</feature>
<feature type="binding site" evidence="1">
    <location>
        <position position="166"/>
    </location>
    <ligand>
        <name>substrate</name>
    </ligand>
</feature>
<feature type="binding site" evidence="1">
    <location>
        <position position="170"/>
    </location>
    <ligand>
        <name>substrate</name>
    </ligand>
</feature>
<feature type="binding site" description="via carbamate group" evidence="1">
    <location>
        <position position="194"/>
    </location>
    <ligand>
        <name>Mg(2+)</name>
        <dbReference type="ChEBI" id="CHEBI:18420"/>
    </ligand>
</feature>
<feature type="binding site" evidence="1">
    <location>
        <position position="196"/>
    </location>
    <ligand>
        <name>Mg(2+)</name>
        <dbReference type="ChEBI" id="CHEBI:18420"/>
    </ligand>
</feature>
<feature type="binding site" evidence="1">
    <location>
        <position position="197"/>
    </location>
    <ligand>
        <name>Mg(2+)</name>
        <dbReference type="ChEBI" id="CHEBI:18420"/>
    </ligand>
</feature>
<feature type="binding site" evidence="1">
    <location>
        <position position="288"/>
    </location>
    <ligand>
        <name>substrate</name>
    </ligand>
</feature>
<feature type="binding site" evidence="1">
    <location>
        <position position="320"/>
    </location>
    <ligand>
        <name>substrate</name>
    </ligand>
</feature>
<feature type="binding site" evidence="1">
    <location>
        <position position="372"/>
    </location>
    <ligand>
        <name>substrate</name>
    </ligand>
</feature>
<feature type="site" description="Transition state stabilizer" evidence="1">
    <location>
        <position position="327"/>
    </location>
</feature>
<feature type="modified residue" description="N6-carboxylysine" evidence="1">
    <location>
        <position position="194"/>
    </location>
</feature>
<name>RBL1B_ACIFR</name>
<keyword id="KW-0113">Calvin cycle</keyword>
<keyword id="KW-0120">Carbon dioxide fixation</keyword>
<keyword id="KW-0456">Lyase</keyword>
<keyword id="KW-0460">Magnesium</keyword>
<keyword id="KW-0479">Metal-binding</keyword>
<keyword id="KW-0503">Monooxygenase</keyword>
<keyword id="KW-0560">Oxidoreductase</keyword>
<proteinExistence type="inferred from homology"/>
<dbReference type="EC" id="4.1.1.39" evidence="1"/>
<dbReference type="EMBL" id="X70355">
    <property type="protein sequence ID" value="CAA49814.1"/>
    <property type="molecule type" value="Genomic_DNA"/>
</dbReference>
<dbReference type="PIR" id="S18315">
    <property type="entry name" value="S18315"/>
</dbReference>
<dbReference type="SMR" id="P0C917"/>
<dbReference type="GO" id="GO:0000287">
    <property type="term" value="F:magnesium ion binding"/>
    <property type="evidence" value="ECO:0007669"/>
    <property type="project" value="UniProtKB-UniRule"/>
</dbReference>
<dbReference type="GO" id="GO:0004497">
    <property type="term" value="F:monooxygenase activity"/>
    <property type="evidence" value="ECO:0007669"/>
    <property type="project" value="UniProtKB-KW"/>
</dbReference>
<dbReference type="GO" id="GO:0016984">
    <property type="term" value="F:ribulose-bisphosphate carboxylase activity"/>
    <property type="evidence" value="ECO:0007669"/>
    <property type="project" value="UniProtKB-UniRule"/>
</dbReference>
<dbReference type="GO" id="GO:0019253">
    <property type="term" value="P:reductive pentose-phosphate cycle"/>
    <property type="evidence" value="ECO:0007669"/>
    <property type="project" value="UniProtKB-UniRule"/>
</dbReference>
<dbReference type="Gene3D" id="3.20.20.110">
    <property type="entry name" value="Ribulose bisphosphate carboxylase, large subunit, C-terminal domain"/>
    <property type="match status" value="1"/>
</dbReference>
<dbReference type="Gene3D" id="3.30.70.150">
    <property type="entry name" value="RuBisCO large subunit, N-terminal domain"/>
    <property type="match status" value="1"/>
</dbReference>
<dbReference type="HAMAP" id="MF_01338">
    <property type="entry name" value="RuBisCO_L_type1"/>
    <property type="match status" value="1"/>
</dbReference>
<dbReference type="InterPro" id="IPR033966">
    <property type="entry name" value="RuBisCO"/>
</dbReference>
<dbReference type="InterPro" id="IPR020878">
    <property type="entry name" value="RuBisCo_large_chain_AS"/>
</dbReference>
<dbReference type="InterPro" id="IPR000685">
    <property type="entry name" value="RuBisCO_lsu_C"/>
</dbReference>
<dbReference type="InterPro" id="IPR036376">
    <property type="entry name" value="RuBisCO_lsu_C_sf"/>
</dbReference>
<dbReference type="InterPro" id="IPR017443">
    <property type="entry name" value="RuBisCO_lsu_fd_N"/>
</dbReference>
<dbReference type="InterPro" id="IPR036422">
    <property type="entry name" value="RuBisCO_lsu_N_sf"/>
</dbReference>
<dbReference type="InterPro" id="IPR020888">
    <property type="entry name" value="RuBisCO_lsuI"/>
</dbReference>
<dbReference type="NCBIfam" id="NF003252">
    <property type="entry name" value="PRK04208.1"/>
    <property type="match status" value="1"/>
</dbReference>
<dbReference type="PANTHER" id="PTHR42704">
    <property type="entry name" value="RIBULOSE BISPHOSPHATE CARBOXYLASE"/>
    <property type="match status" value="1"/>
</dbReference>
<dbReference type="PANTHER" id="PTHR42704:SF17">
    <property type="entry name" value="RIBULOSE BISPHOSPHATE CARBOXYLASE LARGE CHAIN"/>
    <property type="match status" value="1"/>
</dbReference>
<dbReference type="Pfam" id="PF00016">
    <property type="entry name" value="RuBisCO_large"/>
    <property type="match status" value="1"/>
</dbReference>
<dbReference type="Pfam" id="PF02788">
    <property type="entry name" value="RuBisCO_large_N"/>
    <property type="match status" value="1"/>
</dbReference>
<dbReference type="SFLD" id="SFLDG01052">
    <property type="entry name" value="RuBisCO"/>
    <property type="match status" value="1"/>
</dbReference>
<dbReference type="SFLD" id="SFLDS00014">
    <property type="entry name" value="RuBisCO"/>
    <property type="match status" value="1"/>
</dbReference>
<dbReference type="SFLD" id="SFLDG00301">
    <property type="entry name" value="RuBisCO-like_proteins"/>
    <property type="match status" value="1"/>
</dbReference>
<dbReference type="SUPFAM" id="SSF51649">
    <property type="entry name" value="RuBisCo, C-terminal domain"/>
    <property type="match status" value="1"/>
</dbReference>
<dbReference type="SUPFAM" id="SSF54966">
    <property type="entry name" value="RuBisCO, large subunit, small (N-terminal) domain"/>
    <property type="match status" value="1"/>
</dbReference>
<dbReference type="PROSITE" id="PS00157">
    <property type="entry name" value="RUBISCO_LARGE"/>
    <property type="match status" value="1"/>
</dbReference>
<sequence length="473" mass="52810">MAVKTYNAGVKDYRNTYWEPDYSVKDTDILAVFKITPQAGVDREEAPAAVAAESSTGTWTTVWTDLLTDLDYYKGRAYRIEDVPGDDTCFYAFIAYPIDLFEEGSVVNVFTSLVGNVFGFKAVRALRLEDVRFPIAYVKTCGGPPHGIQVERDIMNKYGRPLLGCTIKPKLGLSAKNYGRACYEGLRGGLDFTKDDENVNSQPFMRWRQRFDFVMEAIQKAEAETGERKGHYLNVTAPTPEEMYKRAEYAKEIGAPIIMHDYITGGFCANTGLANWCRDNGMLLHIHRAMHRVLDRNPHHGIHFRVLTKILRLSGGDHLHSGTVVGKLEGDREATLGWIDIMRDRFIKEDRSRGIFFDQDWGSMPGVMPVASGGIHVWHMPALVTIFGDDSVLQFGGGTLGHPWGNAKGAAANRVALEACVEARNRGVAIEKEGKAVLTEAAKHSPELKIAMETWKEIKSEFDTVDKLDVAHK</sequence>
<accession>P0C917</accession>
<accession>Q07087</accession>
<accession>Q9APC8</accession>
<reference key="1">
    <citation type="journal article" date="1991" name="FEBS Lett.">
        <title>Isolation and nucleotide sequence of the Thiobacillus ferrooxidans genes for the small and large subunits of ribulose 1,5-bisphosphate carboxylase/oxygenase.</title>
        <authorList>
            <person name="Pulgar V."/>
            <person name="Gaete L."/>
            <person name="Allende J."/>
            <person name="Orellana O."/>
            <person name="Jordana X."/>
            <person name="Jedlicki E."/>
        </authorList>
    </citation>
    <scope>NUCLEOTIDE SEQUENCE [GENOMIC DNA]</scope>
</reference>